<dbReference type="EC" id="3.1.1.-"/>
<dbReference type="EMBL" id="AL009126">
    <property type="protein sequence ID" value="CAB12521.1"/>
    <property type="molecule type" value="Genomic_DNA"/>
</dbReference>
<dbReference type="PIR" id="C69797">
    <property type="entry name" value="C69797"/>
</dbReference>
<dbReference type="RefSeq" id="NP_388583.1">
    <property type="nucleotide sequence ID" value="NC_000964.3"/>
</dbReference>
<dbReference type="RefSeq" id="WP_003233825.1">
    <property type="nucleotide sequence ID" value="NZ_OZ025638.1"/>
</dbReference>
<dbReference type="SMR" id="O31523"/>
<dbReference type="FunCoup" id="O31523">
    <property type="interactions" value="121"/>
</dbReference>
<dbReference type="STRING" id="224308.BSU07020"/>
<dbReference type="PaxDb" id="224308-BSU07020"/>
<dbReference type="EnsemblBacteria" id="CAB12521">
    <property type="protein sequence ID" value="CAB12521"/>
    <property type="gene ID" value="BSU_07020"/>
</dbReference>
<dbReference type="GeneID" id="936074"/>
<dbReference type="KEGG" id="bsu:BSU07020"/>
<dbReference type="PATRIC" id="fig|224308.43.peg.740"/>
<dbReference type="eggNOG" id="COG2755">
    <property type="taxonomic scope" value="Bacteria"/>
</dbReference>
<dbReference type="InParanoid" id="O31523"/>
<dbReference type="OrthoDB" id="9807041at2"/>
<dbReference type="PhylomeDB" id="O31523"/>
<dbReference type="BioCyc" id="BSUB:BSU07020-MONOMER"/>
<dbReference type="Proteomes" id="UP000001570">
    <property type="component" value="Chromosome"/>
</dbReference>
<dbReference type="GO" id="GO:0016787">
    <property type="term" value="F:hydrolase activity"/>
    <property type="evidence" value="ECO:0007669"/>
    <property type="project" value="UniProtKB-KW"/>
</dbReference>
<dbReference type="CDD" id="cd01821">
    <property type="entry name" value="Rhamnogalacturan_acetylesterase_like"/>
    <property type="match status" value="1"/>
</dbReference>
<dbReference type="Gene3D" id="3.40.50.1110">
    <property type="entry name" value="SGNH hydrolase"/>
    <property type="match status" value="1"/>
</dbReference>
<dbReference type="InterPro" id="IPR037459">
    <property type="entry name" value="RhgT-like"/>
</dbReference>
<dbReference type="InterPro" id="IPR013830">
    <property type="entry name" value="SGNH_hydro"/>
</dbReference>
<dbReference type="InterPro" id="IPR036514">
    <property type="entry name" value="SGNH_hydro_sf"/>
</dbReference>
<dbReference type="PANTHER" id="PTHR43695">
    <property type="entry name" value="PUTATIVE (AFU_ORTHOLOGUE AFUA_2G17250)-RELATED"/>
    <property type="match status" value="1"/>
</dbReference>
<dbReference type="PANTHER" id="PTHR43695:SF1">
    <property type="entry name" value="RHAMNOGALACTURONAN ACETYLESTERASE"/>
    <property type="match status" value="1"/>
</dbReference>
<dbReference type="Pfam" id="PF13472">
    <property type="entry name" value="Lipase_GDSL_2"/>
    <property type="match status" value="1"/>
</dbReference>
<dbReference type="SUPFAM" id="SSF52266">
    <property type="entry name" value="SGNH hydrolase"/>
    <property type="match status" value="1"/>
</dbReference>
<keyword id="KW-0378">Hydrolase</keyword>
<keyword id="KW-1185">Reference proteome</keyword>
<proteinExistence type="evidence at protein level"/>
<sequence>MMKKPIQVFLAGDSTVSDCPPHEAPMAGWGQVFGQLFSEGVLVRNHAKGGASTNSFVEEGRLQAIAEHITQGDYLLIQFGHNDQKPRGTKPYSTFQQFLTLFADTAREKGAHPVFVTSVQRRRFDENGRIEHTLGEYPDAMKALAKELDVPVIDLLAKTKVLYEAYGPEESKRLFVWFQPNEHPNYPDGIEDNTHFSEKGAMEVAKLVAEGIEELGLPLKDHLVSREGKEHV</sequence>
<protein>
    <recommendedName>
        <fullName>Rhamnogalacturonan acetylesterase RhgT</fullName>
        <shortName>RGAE</shortName>
        <ecNumber>3.1.1.-</ecNumber>
    </recommendedName>
</protein>
<accession>O31523</accession>
<reference key="1">
    <citation type="journal article" date="1997" name="Nature">
        <title>The complete genome sequence of the Gram-positive bacterium Bacillus subtilis.</title>
        <authorList>
            <person name="Kunst F."/>
            <person name="Ogasawara N."/>
            <person name="Moszer I."/>
            <person name="Albertini A.M."/>
            <person name="Alloni G."/>
            <person name="Azevedo V."/>
            <person name="Bertero M.G."/>
            <person name="Bessieres P."/>
            <person name="Bolotin A."/>
            <person name="Borchert S."/>
            <person name="Borriss R."/>
            <person name="Boursier L."/>
            <person name="Brans A."/>
            <person name="Braun M."/>
            <person name="Brignell S.C."/>
            <person name="Bron S."/>
            <person name="Brouillet S."/>
            <person name="Bruschi C.V."/>
            <person name="Caldwell B."/>
            <person name="Capuano V."/>
            <person name="Carter N.M."/>
            <person name="Choi S.-K."/>
            <person name="Codani J.-J."/>
            <person name="Connerton I.F."/>
            <person name="Cummings N.J."/>
            <person name="Daniel R.A."/>
            <person name="Denizot F."/>
            <person name="Devine K.M."/>
            <person name="Duesterhoeft A."/>
            <person name="Ehrlich S.D."/>
            <person name="Emmerson P.T."/>
            <person name="Entian K.-D."/>
            <person name="Errington J."/>
            <person name="Fabret C."/>
            <person name="Ferrari E."/>
            <person name="Foulger D."/>
            <person name="Fritz C."/>
            <person name="Fujita M."/>
            <person name="Fujita Y."/>
            <person name="Fuma S."/>
            <person name="Galizzi A."/>
            <person name="Galleron N."/>
            <person name="Ghim S.-Y."/>
            <person name="Glaser P."/>
            <person name="Goffeau A."/>
            <person name="Golightly E.J."/>
            <person name="Grandi G."/>
            <person name="Guiseppi G."/>
            <person name="Guy B.J."/>
            <person name="Haga K."/>
            <person name="Haiech J."/>
            <person name="Harwood C.R."/>
            <person name="Henaut A."/>
            <person name="Hilbert H."/>
            <person name="Holsappel S."/>
            <person name="Hosono S."/>
            <person name="Hullo M.-F."/>
            <person name="Itaya M."/>
            <person name="Jones L.-M."/>
            <person name="Joris B."/>
            <person name="Karamata D."/>
            <person name="Kasahara Y."/>
            <person name="Klaerr-Blanchard M."/>
            <person name="Klein C."/>
            <person name="Kobayashi Y."/>
            <person name="Koetter P."/>
            <person name="Koningstein G."/>
            <person name="Krogh S."/>
            <person name="Kumano M."/>
            <person name="Kurita K."/>
            <person name="Lapidus A."/>
            <person name="Lardinois S."/>
            <person name="Lauber J."/>
            <person name="Lazarevic V."/>
            <person name="Lee S.-M."/>
            <person name="Levine A."/>
            <person name="Liu H."/>
            <person name="Masuda S."/>
            <person name="Mauel C."/>
            <person name="Medigue C."/>
            <person name="Medina N."/>
            <person name="Mellado R.P."/>
            <person name="Mizuno M."/>
            <person name="Moestl D."/>
            <person name="Nakai S."/>
            <person name="Noback M."/>
            <person name="Noone D."/>
            <person name="O'Reilly M."/>
            <person name="Ogawa K."/>
            <person name="Ogiwara A."/>
            <person name="Oudega B."/>
            <person name="Park S.-H."/>
            <person name="Parro V."/>
            <person name="Pohl T.M."/>
            <person name="Portetelle D."/>
            <person name="Porwollik S."/>
            <person name="Prescott A.M."/>
            <person name="Presecan E."/>
            <person name="Pujic P."/>
            <person name="Purnelle B."/>
            <person name="Rapoport G."/>
            <person name="Rey M."/>
            <person name="Reynolds S."/>
            <person name="Rieger M."/>
            <person name="Rivolta C."/>
            <person name="Rocha E."/>
            <person name="Roche B."/>
            <person name="Rose M."/>
            <person name="Sadaie Y."/>
            <person name="Sato T."/>
            <person name="Scanlan E."/>
            <person name="Schleich S."/>
            <person name="Schroeter R."/>
            <person name="Scoffone F."/>
            <person name="Sekiguchi J."/>
            <person name="Sekowska A."/>
            <person name="Seror S.J."/>
            <person name="Serror P."/>
            <person name="Shin B.-S."/>
            <person name="Soldo B."/>
            <person name="Sorokin A."/>
            <person name="Tacconi E."/>
            <person name="Takagi T."/>
            <person name="Takahashi H."/>
            <person name="Takemaru K."/>
            <person name="Takeuchi M."/>
            <person name="Tamakoshi A."/>
            <person name="Tanaka T."/>
            <person name="Terpstra P."/>
            <person name="Tognoni A."/>
            <person name="Tosato V."/>
            <person name="Uchiyama S."/>
            <person name="Vandenbol M."/>
            <person name="Vannier F."/>
            <person name="Vassarotti A."/>
            <person name="Viari A."/>
            <person name="Wambutt R."/>
            <person name="Wedler E."/>
            <person name="Wedler H."/>
            <person name="Weitzenegger T."/>
            <person name="Winters P."/>
            <person name="Wipat A."/>
            <person name="Yamamoto H."/>
            <person name="Yamane K."/>
            <person name="Yasumoto K."/>
            <person name="Yata K."/>
            <person name="Yoshida K."/>
            <person name="Yoshikawa H.-F."/>
            <person name="Zumstein E."/>
            <person name="Yoshikawa H."/>
            <person name="Danchin A."/>
        </authorList>
    </citation>
    <scope>NUCLEOTIDE SEQUENCE [LARGE SCALE GENOMIC DNA]</scope>
    <source>
        <strain>168</strain>
    </source>
</reference>
<reference key="2">
    <citation type="journal article" date="2007" name="Appl. Environ. Microbiol.">
        <title>Plant cell wall degradation by saprophytic Bacillus subtilis strains: gene clusters responsible for rhamnogalacturonan depolymerization.</title>
        <authorList>
            <person name="Ochiai A."/>
            <person name="Itoh T."/>
            <person name="Kawamata A."/>
            <person name="Hashimoto W."/>
            <person name="Murata K."/>
        </authorList>
    </citation>
    <scope>INDUCTION</scope>
    <scope>FUNCTION</scope>
    <source>
        <strain>168</strain>
    </source>
</reference>
<reference key="3">
    <citation type="journal article" date="2008" name="Proteins">
        <title>YesT: a new rhamnogalacturonan acetyl esterase from Bacillus subtilis.</title>
        <authorList>
            <person name="Martinez-Martinez I."/>
            <person name="Navarro-Fernandez J."/>
            <person name="Daniel Lozada-Ramirez J."/>
            <person name="Garcia-Carmona F."/>
            <person name="Sanchez-Ferrer A."/>
        </authorList>
    </citation>
    <scope>BIOPHYSICOCHEMICAL PROPERTIES</scope>
    <scope>ACTIVITY REGULATION</scope>
    <scope>SUBSTRATE SPECIFICITY</scope>
    <scope>SUBUNIT</scope>
    <source>
        <strain>ATCC 6633 / PCI 219 / NRS 231</strain>
    </source>
</reference>
<gene>
    <name type="primary">rhgT</name>
    <name type="synonym">yesT</name>
    <name type="ordered locus">BSU07020</name>
</gene>
<feature type="chain" id="PRO_0000360863" description="Rhamnogalacturonan acetylesterase RhgT">
    <location>
        <begin position="1"/>
        <end position="232"/>
    </location>
</feature>
<feature type="active site" description="Nucleophile" evidence="1">
    <location>
        <position position="14"/>
    </location>
</feature>
<feature type="active site" evidence="1">
    <location>
        <position position="191"/>
    </location>
</feature>
<feature type="active site" evidence="1">
    <location>
        <position position="195"/>
    </location>
</feature>
<comment type="function">
    <text evidence="2">May play a role in the degradation of type I rhamnogalacturonan derived from plant cell walls. This enzyme has a broad substrate specificity, and shows strong preference for glucose pentaacetate, beta-naphthylacetate, and p-nitrophenyl acetate (pNPA). Also active toward acetylated xylan.</text>
</comment>
<comment type="activity regulation">
    <text evidence="3">Almost completely inhibited by diethylpyrocarbonate at 5 mM and completely inhibited by phenylmethylsulfonyl fluoride (PMSF) at 50 mM. Dimethyl phosphite achieves only a 53% inhibition. Also inhibited by metal ions (magnesium, manganese and calcium) and chelating agent (EDTA) at the same level.</text>
</comment>
<comment type="biophysicochemical properties">
    <kinetics>
        <KM evidence="3">1 mM for alpha-naphthyl acetate (at 37 degrees Celsius and pH 7.3)</KM>
        <KM evidence="3">1.1 mM for beta-naphthyl acetate (at 37 degrees Celsius and pH 7.3)</KM>
        <KM evidence="3">2.8 mM for p-nitrophenyl acetate (at 37 degrees Celsius and pH 7.3)</KM>
        <KM evidence="3">7.1 mM for cephalosporin C (at 37 degrees Celsius and pH 7.3)</KM>
        <KM evidence="3">9.1 mM for glucose pentaacetate (at 37 degrees Celsius and pH 7.3)</KM>
        <KM evidence="3">124.3 mM for 7-aminocephalosporanic acid (at 37 degrees Celsius and pH 7.3)</KM>
        <Vmax evidence="3">709.0 umol/min/mg enzyme with alpha-naphthyl acetate (at 37 degrees Celsius and pH 7.3)</Vmax>
        <Vmax evidence="3">1163.0 umol/min/mg enzyme with cephalosporin C (at 37 degrees Celsius and pH 7.3)</Vmax>
        <Vmax evidence="3">3917.0 umol/min/mg enzyme with beta-naphthyl acetate (at 37 degrees Celsius and pH 7.3)</Vmax>
        <Vmax evidence="3">4360.0 umol/min/mg enzyme with 7-aminocephalosporanic acid (at 37 degrees Celsius and pH 7.3)</Vmax>
        <Vmax evidence="3">5160.0 umol/min/mg enzyme with p-nitrophenyl acetate (at 37 degrees Celsius and pH 7.3)</Vmax>
        <Vmax evidence="3">13726.0 umol/min/mg enzyme with glucose pentaacetate (at 37 degrees Celsius and pH 7.3)</Vmax>
    </kinetics>
    <phDependence>
        <text evidence="3">Optimum pH is 8.5. The enzyme is more active in the 7.5-9.0 range, achieving a sharp decrease in the activity below pH 7.0.</text>
    </phDependence>
    <temperatureDependence>
        <text evidence="3">Optimum temperature is 35 degrees Celsius. The enzyme is quite thermostable in the range of 35 to 40 degrees Celsius, and suffering a decrease in thermostability above 45 degrees Celsius.</text>
    </temperatureDependence>
</comment>
<comment type="subunit">
    <text evidence="3">Monomer.</text>
</comment>
<comment type="induction">
    <text evidence="2">Up-regulated by growth on type I rhamnogalacturonan.</text>
</comment>
<comment type="similarity">
    <text evidence="4">Belongs to the 'GDSL' lipolytic enzyme family.</text>
</comment>
<evidence type="ECO:0000250" key="1"/>
<evidence type="ECO:0000269" key="2">
    <source>
    </source>
</evidence>
<evidence type="ECO:0000269" key="3">
    <source>
    </source>
</evidence>
<evidence type="ECO:0000305" key="4"/>
<organism>
    <name type="scientific">Bacillus subtilis (strain 168)</name>
    <dbReference type="NCBI Taxonomy" id="224308"/>
    <lineage>
        <taxon>Bacteria</taxon>
        <taxon>Bacillati</taxon>
        <taxon>Bacillota</taxon>
        <taxon>Bacilli</taxon>
        <taxon>Bacillales</taxon>
        <taxon>Bacillaceae</taxon>
        <taxon>Bacillus</taxon>
    </lineage>
</organism>
<name>RHGT1_BACSU</name>